<gene>
    <name type="primary">Csnk1a1</name>
</gene>
<dbReference type="EC" id="2.7.11.1"/>
<dbReference type="EMBL" id="U77582">
    <property type="protein sequence ID" value="AAB19227.1"/>
    <property type="molecule type" value="mRNA"/>
</dbReference>
<dbReference type="EMBL" id="U77583">
    <property type="protein sequence ID" value="AAB19228.1"/>
    <property type="molecule type" value="Genomic_DNA"/>
</dbReference>
<dbReference type="RefSeq" id="NP_446067.1">
    <property type="nucleotide sequence ID" value="NM_053615.1"/>
</dbReference>
<dbReference type="SMR" id="P97633"/>
<dbReference type="BioGRID" id="250223">
    <property type="interactions" value="2"/>
</dbReference>
<dbReference type="FunCoup" id="P97633">
    <property type="interactions" value="3532"/>
</dbReference>
<dbReference type="IntAct" id="P97633">
    <property type="interactions" value="2"/>
</dbReference>
<dbReference type="MINT" id="P97633"/>
<dbReference type="STRING" id="10116.ENSRNOP00000051516"/>
<dbReference type="BindingDB" id="P97633"/>
<dbReference type="iPTMnet" id="P97633"/>
<dbReference type="PhosphoSitePlus" id="P97633"/>
<dbReference type="jPOST" id="P97633"/>
<dbReference type="PaxDb" id="10116-ENSRNOP00000051516"/>
<dbReference type="PeptideAtlas" id="P97633"/>
<dbReference type="GeneID" id="113927"/>
<dbReference type="KEGG" id="rno:113927"/>
<dbReference type="UCSC" id="RGD:71098">
    <molecule id="P97633-1"/>
    <property type="organism name" value="rat"/>
</dbReference>
<dbReference type="AGR" id="RGD:71098"/>
<dbReference type="CTD" id="1452"/>
<dbReference type="RGD" id="71098">
    <property type="gene designation" value="Csnk1a1"/>
</dbReference>
<dbReference type="eggNOG" id="KOG1163">
    <property type="taxonomic scope" value="Eukaryota"/>
</dbReference>
<dbReference type="InParanoid" id="P97633"/>
<dbReference type="BRENDA" id="2.7.11.1">
    <property type="organism ID" value="5301"/>
</dbReference>
<dbReference type="Reactome" id="R-RNO-195253">
    <property type="pathway name" value="Degradation of beta-catenin by the destruction complex"/>
</dbReference>
<dbReference type="Reactome" id="R-RNO-196299">
    <property type="pathway name" value="Beta-catenin phosphorylation cascade"/>
</dbReference>
<dbReference type="Reactome" id="R-RNO-4641262">
    <property type="pathway name" value="Disassembly of the destruction complex and recruitment of AXIN to the membrane"/>
</dbReference>
<dbReference type="Reactome" id="R-RNO-5610785">
    <property type="pathway name" value="GLI3 is processed to GLI3R by the proteasome"/>
</dbReference>
<dbReference type="Reactome" id="R-RNO-5635838">
    <property type="pathway name" value="Activation of SMO"/>
</dbReference>
<dbReference type="PRO" id="PR:P97633"/>
<dbReference type="Proteomes" id="UP000002494">
    <property type="component" value="Unplaced"/>
</dbReference>
<dbReference type="GO" id="GO:0030877">
    <property type="term" value="C:beta-catenin destruction complex"/>
    <property type="evidence" value="ECO:0000250"/>
    <property type="project" value="ParkinsonsUK-UCL"/>
</dbReference>
<dbReference type="GO" id="GO:0005813">
    <property type="term" value="C:centrosome"/>
    <property type="evidence" value="ECO:0000266"/>
    <property type="project" value="RGD"/>
</dbReference>
<dbReference type="GO" id="GO:0036064">
    <property type="term" value="C:ciliary basal body"/>
    <property type="evidence" value="ECO:0000250"/>
    <property type="project" value="UniProtKB"/>
</dbReference>
<dbReference type="GO" id="GO:0005737">
    <property type="term" value="C:cytoplasm"/>
    <property type="evidence" value="ECO:0000318"/>
    <property type="project" value="GO_Central"/>
</dbReference>
<dbReference type="GO" id="GO:0005829">
    <property type="term" value="C:cytosol"/>
    <property type="evidence" value="ECO:0000304"/>
    <property type="project" value="Reactome"/>
</dbReference>
<dbReference type="GO" id="GO:0045095">
    <property type="term" value="C:keratin filament"/>
    <property type="evidence" value="ECO:0000266"/>
    <property type="project" value="RGD"/>
</dbReference>
<dbReference type="GO" id="GO:0000776">
    <property type="term" value="C:kinetochore"/>
    <property type="evidence" value="ECO:0007669"/>
    <property type="project" value="UniProtKB-KW"/>
</dbReference>
<dbReference type="GO" id="GO:0005847">
    <property type="term" value="C:mRNA cleavage and polyadenylation specificity factor complex"/>
    <property type="evidence" value="ECO:0000266"/>
    <property type="project" value="RGD"/>
</dbReference>
<dbReference type="GO" id="GO:0016607">
    <property type="term" value="C:nuclear speck"/>
    <property type="evidence" value="ECO:0000314"/>
    <property type="project" value="RGD"/>
</dbReference>
<dbReference type="GO" id="GO:0005634">
    <property type="term" value="C:nucleus"/>
    <property type="evidence" value="ECO:0000318"/>
    <property type="project" value="GO_Central"/>
</dbReference>
<dbReference type="GO" id="GO:1990904">
    <property type="term" value="C:ribonucleoprotein complex"/>
    <property type="evidence" value="ECO:0000266"/>
    <property type="project" value="RGD"/>
</dbReference>
<dbReference type="GO" id="GO:0005819">
    <property type="term" value="C:spindle"/>
    <property type="evidence" value="ECO:0000250"/>
    <property type="project" value="UniProtKB"/>
</dbReference>
<dbReference type="GO" id="GO:0005524">
    <property type="term" value="F:ATP binding"/>
    <property type="evidence" value="ECO:0000314"/>
    <property type="project" value="RGD"/>
</dbReference>
<dbReference type="GO" id="GO:0000287">
    <property type="term" value="F:magnesium ion binding"/>
    <property type="evidence" value="ECO:0000314"/>
    <property type="project" value="RGD"/>
</dbReference>
<dbReference type="GO" id="GO:0042277">
    <property type="term" value="F:peptide binding"/>
    <property type="evidence" value="ECO:0000314"/>
    <property type="project" value="RGD"/>
</dbReference>
<dbReference type="GO" id="GO:0051219">
    <property type="term" value="F:phosphoprotein binding"/>
    <property type="evidence" value="ECO:0000314"/>
    <property type="project" value="RGD"/>
</dbReference>
<dbReference type="GO" id="GO:0004672">
    <property type="term" value="F:protein kinase activity"/>
    <property type="evidence" value="ECO:0000250"/>
    <property type="project" value="UniProtKB"/>
</dbReference>
<dbReference type="GO" id="GO:0106310">
    <property type="term" value="F:protein serine kinase activity"/>
    <property type="evidence" value="ECO:0007669"/>
    <property type="project" value="RHEA"/>
</dbReference>
<dbReference type="GO" id="GO:0004674">
    <property type="term" value="F:protein serine/threonine kinase activity"/>
    <property type="evidence" value="ECO:0000314"/>
    <property type="project" value="ParkinsonsUK-UCL"/>
</dbReference>
<dbReference type="GO" id="GO:0051301">
    <property type="term" value="P:cell division"/>
    <property type="evidence" value="ECO:0007669"/>
    <property type="project" value="UniProtKB-KW"/>
</dbReference>
<dbReference type="GO" id="GO:0000902">
    <property type="term" value="P:cell morphogenesis"/>
    <property type="evidence" value="ECO:0000266"/>
    <property type="project" value="RGD"/>
</dbReference>
<dbReference type="GO" id="GO:0031670">
    <property type="term" value="P:cellular response to nutrient"/>
    <property type="evidence" value="ECO:0000266"/>
    <property type="project" value="RGD"/>
</dbReference>
<dbReference type="GO" id="GO:0007030">
    <property type="term" value="P:Golgi organization"/>
    <property type="evidence" value="ECO:0000266"/>
    <property type="project" value="RGD"/>
</dbReference>
<dbReference type="GO" id="GO:0045104">
    <property type="term" value="P:intermediate filament cytoskeleton organization"/>
    <property type="evidence" value="ECO:0000250"/>
    <property type="project" value="UniProtKB"/>
</dbReference>
<dbReference type="GO" id="GO:0090090">
    <property type="term" value="P:negative regulation of canonical Wnt signaling pathway"/>
    <property type="evidence" value="ECO:0000314"/>
    <property type="project" value="ParkinsonsUK-UCL"/>
</dbReference>
<dbReference type="GO" id="GO:1900226">
    <property type="term" value="P:negative regulation of NLRP3 inflammasome complex assembly"/>
    <property type="evidence" value="ECO:0000250"/>
    <property type="project" value="UniProtKB"/>
</dbReference>
<dbReference type="GO" id="GO:0032436">
    <property type="term" value="P:positive regulation of proteasomal ubiquitin-dependent protein catabolic process"/>
    <property type="evidence" value="ECO:0000266"/>
    <property type="project" value="RGD"/>
</dbReference>
<dbReference type="GO" id="GO:0035025">
    <property type="term" value="P:positive regulation of Rho protein signal transduction"/>
    <property type="evidence" value="ECO:0000266"/>
    <property type="project" value="RGD"/>
</dbReference>
<dbReference type="GO" id="GO:1904263">
    <property type="term" value="P:positive regulation of TORC1 signaling"/>
    <property type="evidence" value="ECO:0000266"/>
    <property type="project" value="RGD"/>
</dbReference>
<dbReference type="GO" id="GO:0007165">
    <property type="term" value="P:signal transduction"/>
    <property type="evidence" value="ECO:0000318"/>
    <property type="project" value="GO_Central"/>
</dbReference>
<dbReference type="GO" id="GO:0016055">
    <property type="term" value="P:Wnt signaling pathway"/>
    <property type="evidence" value="ECO:0007669"/>
    <property type="project" value="UniProtKB-KW"/>
</dbReference>
<dbReference type="CDD" id="cd14128">
    <property type="entry name" value="STKc_CK1_alpha"/>
    <property type="match status" value="1"/>
</dbReference>
<dbReference type="FunFam" id="1.10.510.10:FF:000120">
    <property type="entry name" value="Casein kinase I isoform alpha"/>
    <property type="match status" value="1"/>
</dbReference>
<dbReference type="FunFam" id="3.30.200.20:FF:000538">
    <property type="entry name" value="Putative Casein kinase I"/>
    <property type="match status" value="1"/>
</dbReference>
<dbReference type="Gene3D" id="1.10.510.10">
    <property type="entry name" value="Transferase(Phosphotransferase) domain 1"/>
    <property type="match status" value="1"/>
</dbReference>
<dbReference type="InterPro" id="IPR050235">
    <property type="entry name" value="CK1_Ser-Thr_kinase"/>
</dbReference>
<dbReference type="InterPro" id="IPR011009">
    <property type="entry name" value="Kinase-like_dom_sf"/>
</dbReference>
<dbReference type="InterPro" id="IPR000719">
    <property type="entry name" value="Prot_kinase_dom"/>
</dbReference>
<dbReference type="InterPro" id="IPR017441">
    <property type="entry name" value="Protein_kinase_ATP_BS"/>
</dbReference>
<dbReference type="InterPro" id="IPR008271">
    <property type="entry name" value="Ser/Thr_kinase_AS"/>
</dbReference>
<dbReference type="PANTHER" id="PTHR11909">
    <property type="entry name" value="CASEIN KINASE-RELATED"/>
    <property type="match status" value="1"/>
</dbReference>
<dbReference type="Pfam" id="PF00069">
    <property type="entry name" value="Pkinase"/>
    <property type="match status" value="1"/>
</dbReference>
<dbReference type="SMART" id="SM00220">
    <property type="entry name" value="S_TKc"/>
    <property type="match status" value="1"/>
</dbReference>
<dbReference type="SUPFAM" id="SSF56112">
    <property type="entry name" value="Protein kinase-like (PK-like)"/>
    <property type="match status" value="1"/>
</dbReference>
<dbReference type="PROSITE" id="PS00107">
    <property type="entry name" value="PROTEIN_KINASE_ATP"/>
    <property type="match status" value="1"/>
</dbReference>
<dbReference type="PROSITE" id="PS50011">
    <property type="entry name" value="PROTEIN_KINASE_DOM"/>
    <property type="match status" value="1"/>
</dbReference>
<dbReference type="PROSITE" id="PS00108">
    <property type="entry name" value="PROTEIN_KINASE_ST"/>
    <property type="match status" value="1"/>
</dbReference>
<accession>P97633</accession>
<accession>P97634</accession>
<protein>
    <recommendedName>
        <fullName>Casein kinase I isoform alpha</fullName>
        <shortName>CKI-alpha</shortName>
        <ecNumber>2.7.11.1</ecNumber>
    </recommendedName>
    <alternativeName>
        <fullName>CK1</fullName>
    </alternativeName>
</protein>
<reference key="1">
    <citation type="journal article" date="1996" name="Biochemistry">
        <title>Casein kinase I alpha and alpha L: alternative splicing-generated kinases exhibit different catalytic properties.</title>
        <authorList>
            <person name="Zhang J."/>
            <person name="Gross S.D."/>
            <person name="Schroeder M.D."/>
            <person name="Anderson R.A."/>
        </authorList>
    </citation>
    <scope>NUCLEOTIDE SEQUENCE [GENOMIC DNA / MRNA] (ISOFORMS 1 AND 2)</scope>
    <source>
        <strain>Sprague-Dawley</strain>
    </source>
</reference>
<reference key="2">
    <citation type="journal article" date="2002" name="Cell">
        <title>Control of beta-catenin phosphorylation/degradation by a dual-kinase mechanism.</title>
        <authorList>
            <person name="Liu C."/>
            <person name="Li Y."/>
            <person name="Semenov M."/>
            <person name="Han C."/>
            <person name="Baeg G.-H."/>
            <person name="Tan Y."/>
            <person name="Zhang Z."/>
            <person name="Lin X."/>
            <person name="He X."/>
        </authorList>
    </citation>
    <scope>ROLE IN WNT SIGNALING</scope>
</reference>
<proteinExistence type="evidence at transcript level"/>
<evidence type="ECO:0000250" key="1"/>
<evidence type="ECO:0000250" key="2">
    <source>
        <dbReference type="UniProtKB" id="P48729"/>
    </source>
</evidence>
<evidence type="ECO:0000250" key="3">
    <source>
        <dbReference type="UniProtKB" id="Q8BK63"/>
    </source>
</evidence>
<evidence type="ECO:0000255" key="4">
    <source>
        <dbReference type="PROSITE-ProRule" id="PRU00159"/>
    </source>
</evidence>
<evidence type="ECO:0000255" key="5">
    <source>
        <dbReference type="PROSITE-ProRule" id="PRU10027"/>
    </source>
</evidence>
<evidence type="ECO:0000269" key="6">
    <source>
    </source>
</evidence>
<evidence type="ECO:0000303" key="7">
    <source>
    </source>
</evidence>
<evidence type="ECO:0000305" key="8"/>
<name>KC1A_RAT</name>
<feature type="initiator methionine" description="Removed" evidence="2">
    <location>
        <position position="1"/>
    </location>
</feature>
<feature type="chain" id="PRO_0000192826" description="Casein kinase I isoform alpha">
    <location>
        <begin position="2"/>
        <end position="325"/>
    </location>
</feature>
<feature type="domain" description="Protein kinase" evidence="4">
    <location>
        <begin position="17"/>
        <end position="285"/>
    </location>
</feature>
<feature type="active site" description="Proton acceptor" evidence="4 5">
    <location>
        <position position="136"/>
    </location>
</feature>
<feature type="binding site" evidence="4">
    <location>
        <begin position="23"/>
        <end position="31"/>
    </location>
    <ligand>
        <name>ATP</name>
        <dbReference type="ChEBI" id="CHEBI:30616"/>
    </ligand>
</feature>
<feature type="binding site" evidence="4">
    <location>
        <position position="46"/>
    </location>
    <ligand>
        <name>ATP</name>
        <dbReference type="ChEBI" id="CHEBI:30616"/>
    </ligand>
</feature>
<feature type="modified residue" description="N-acetylalanine" evidence="2">
    <location>
        <position position="2"/>
    </location>
</feature>
<feature type="modified residue" description="Phosphoserine" evidence="2">
    <location>
        <position position="4"/>
    </location>
</feature>
<feature type="modified residue" description="N6-acetyllysine" evidence="2">
    <location>
        <position position="8"/>
    </location>
</feature>
<feature type="splice variant" id="VSP_004745" description="In isoform 2." evidence="7">
    <original>K</original>
    <variation>KCLESPVGKRKRSMTVSPSQDPSFSGLNQ</variation>
    <location>
        <position position="152"/>
    </location>
</feature>
<feature type="modified residue" description="Phosphoserine" evidence="1">
    <location sequence="P97633-2">
        <position position="156"/>
    </location>
</feature>
<sequence length="325" mass="37495">MASSSGSKAEFIVGGKYKLVRKIGSGSFGDIYLAINITNGEEVAVKLESQKARHPQLLYESKLYKILQGGVGIPHIRWYGQGKDYNVLVMDLLGPSLEDLFNFCSRRFTMKTVLMLADQMISRIEYVHTKNFIHRDIKPDNFLMGIGRHCNKLFLIDFGLAKKYRDNRTRQHIPYREDKNLTGTARYASINAHLGIEQSRRDDMESLGYVLMYFNRTSLPWQGLKAATKKQKYEKISEKKMSTPVEVLCKGFPAEFAMYLNYCRGLRFEEAPDYMYLRQLFRILFRTLNHQYDYTFDWTMLKQKAAQQAASSSGQGQQAQTPTGF</sequence>
<comment type="function">
    <text evidence="2 3 6">Casein kinases are operationally defined by their preferential utilization of acidic proteins such as caseins as substrates (By similarity). Can phosphorylate a large number of proteins (By similarity). Participates in Wnt signaling (PubMed:11955436). Phosphorylates CTNNB1 at 'Ser-45' (By similarity). May phosphorylate PER1 and PER2 (By similarity). May play a role in segregating chromosomes during mitosis. May play a role in keratin cytoskeleton disassembly and thereby, it may regulate epithelial cell migration (By similarity). Acts as a positive regulator of mTORC1 and mTORC2 signaling in response to nutrients by mediating phosphorylation of DEPTOR inhibitor (By similarity). Acts as an inhibitor of NLRP3 inflammasome assembly by mediating phosphorylation of NLRP3 (By similarity).</text>
</comment>
<comment type="catalytic activity">
    <reaction>
        <text>L-seryl-[protein] + ATP = O-phospho-L-seryl-[protein] + ADP + H(+)</text>
        <dbReference type="Rhea" id="RHEA:17989"/>
        <dbReference type="Rhea" id="RHEA-COMP:9863"/>
        <dbReference type="Rhea" id="RHEA-COMP:11604"/>
        <dbReference type="ChEBI" id="CHEBI:15378"/>
        <dbReference type="ChEBI" id="CHEBI:29999"/>
        <dbReference type="ChEBI" id="CHEBI:30616"/>
        <dbReference type="ChEBI" id="CHEBI:83421"/>
        <dbReference type="ChEBI" id="CHEBI:456216"/>
        <dbReference type="EC" id="2.7.11.1"/>
    </reaction>
</comment>
<comment type="catalytic activity">
    <reaction>
        <text>L-threonyl-[protein] + ATP = O-phospho-L-threonyl-[protein] + ADP + H(+)</text>
        <dbReference type="Rhea" id="RHEA:46608"/>
        <dbReference type="Rhea" id="RHEA-COMP:11060"/>
        <dbReference type="Rhea" id="RHEA-COMP:11605"/>
        <dbReference type="ChEBI" id="CHEBI:15378"/>
        <dbReference type="ChEBI" id="CHEBI:30013"/>
        <dbReference type="ChEBI" id="CHEBI:30616"/>
        <dbReference type="ChEBI" id="CHEBI:61977"/>
        <dbReference type="ChEBI" id="CHEBI:456216"/>
        <dbReference type="EC" id="2.7.11.1"/>
    </reaction>
</comment>
<comment type="subunit">
    <text evidence="2">Interacts with the Axin complex (By similarity). Interacts with TUT1, leading to TUT1 phosphorylation (By similarity). Interacts with FAM83A, FAM83B, FAM83C, FAM83D, FAM83E, FAM83F, FAM83G and FAM83H (via DUF1669). Interaction with FAM83H recruits CSNK1A1 to keratin filaments (By similarity).</text>
</comment>
<comment type="subcellular location">
    <subcellularLocation>
        <location evidence="2">Cytoplasm</location>
    </subcellularLocation>
    <subcellularLocation>
        <location evidence="2">Cytoplasm</location>
        <location evidence="2">Cytoskeleton</location>
        <location evidence="2">Microtubule organizing center</location>
        <location evidence="2">Centrosome</location>
    </subcellularLocation>
    <subcellularLocation>
        <location evidence="2">Chromosome</location>
        <location evidence="2">Centromere</location>
        <location evidence="2">Kinetochore</location>
    </subcellularLocation>
    <subcellularLocation>
        <location evidence="2">Nucleus speckle</location>
    </subcellularLocation>
    <subcellularLocation>
        <location evidence="3">Cytoplasm</location>
        <location evidence="3">Cytoskeleton</location>
        <location evidence="3">Cilium basal body</location>
    </subcellularLocation>
    <subcellularLocation>
        <location evidence="3">Cytoplasm</location>
        <location evidence="3">Cytoskeleton</location>
        <location evidence="3">Spindle</location>
    </subcellularLocation>
    <text evidence="2">Localizes to the centrosome in interphase cells, and to kinetochore fibers during mitosis. Also recruited to the keratin cytoskeleton.</text>
</comment>
<comment type="alternative products">
    <event type="alternative splicing"/>
    <isoform>
        <id>P97633-1</id>
        <name>1</name>
        <name>CKI-alpha</name>
        <sequence type="displayed"/>
    </isoform>
    <isoform>
        <id>P97633-2</id>
        <name>2</name>
        <name>CKI-alpha-L</name>
        <sequence type="described" ref="VSP_004745"/>
    </isoform>
    <text>Isoforms exhibit differences in binding and activity toward common CKI substrates.</text>
</comment>
<comment type="PTM">
    <text evidence="2">Phosphorylated by MTOR in response to mitogenic stimulation, leading to its activation.</text>
</comment>
<comment type="similarity">
    <text evidence="8">Belongs to the protein kinase superfamily. CK1 Ser/Thr protein kinase family. Casein kinase I subfamily.</text>
</comment>
<organism>
    <name type="scientific">Rattus norvegicus</name>
    <name type="common">Rat</name>
    <dbReference type="NCBI Taxonomy" id="10116"/>
    <lineage>
        <taxon>Eukaryota</taxon>
        <taxon>Metazoa</taxon>
        <taxon>Chordata</taxon>
        <taxon>Craniata</taxon>
        <taxon>Vertebrata</taxon>
        <taxon>Euteleostomi</taxon>
        <taxon>Mammalia</taxon>
        <taxon>Eutheria</taxon>
        <taxon>Euarchontoglires</taxon>
        <taxon>Glires</taxon>
        <taxon>Rodentia</taxon>
        <taxon>Myomorpha</taxon>
        <taxon>Muroidea</taxon>
        <taxon>Muridae</taxon>
        <taxon>Murinae</taxon>
        <taxon>Rattus</taxon>
    </lineage>
</organism>
<keyword id="KW-0007">Acetylation</keyword>
<keyword id="KW-0025">Alternative splicing</keyword>
<keyword id="KW-0067">ATP-binding</keyword>
<keyword id="KW-0131">Cell cycle</keyword>
<keyword id="KW-0132">Cell division</keyword>
<keyword id="KW-0966">Cell projection</keyword>
<keyword id="KW-0137">Centromere</keyword>
<keyword id="KW-0158">Chromosome</keyword>
<keyword id="KW-0963">Cytoplasm</keyword>
<keyword id="KW-0206">Cytoskeleton</keyword>
<keyword id="KW-0418">Kinase</keyword>
<keyword id="KW-0995">Kinetochore</keyword>
<keyword id="KW-0498">Mitosis</keyword>
<keyword id="KW-0547">Nucleotide-binding</keyword>
<keyword id="KW-0539">Nucleus</keyword>
<keyword id="KW-0597">Phosphoprotein</keyword>
<keyword id="KW-1185">Reference proteome</keyword>
<keyword id="KW-0723">Serine/threonine-protein kinase</keyword>
<keyword id="KW-0808">Transferase</keyword>
<keyword id="KW-0879">Wnt signaling pathway</keyword>